<dbReference type="EC" id="2.1.1.-" evidence="1"/>
<dbReference type="EMBL" id="CP000412">
    <property type="protein sequence ID" value="ABJ58415.1"/>
    <property type="molecule type" value="Genomic_DNA"/>
</dbReference>
<dbReference type="RefSeq" id="WP_011678185.1">
    <property type="nucleotide sequence ID" value="NC_008529.1"/>
</dbReference>
<dbReference type="PDB" id="3GRZ">
    <property type="method" value="X-ray"/>
    <property type="resolution" value="2.00 A"/>
    <property type="chains" value="A/B=117-313"/>
</dbReference>
<dbReference type="PDBsum" id="3GRZ"/>
<dbReference type="SMR" id="Q04AV7"/>
<dbReference type="KEGG" id="lbu:LBUL_0809"/>
<dbReference type="HOGENOM" id="CLU_049382_0_1_9"/>
<dbReference type="BioCyc" id="LDEL321956:LBUL_RS03850-MONOMER"/>
<dbReference type="EvolutionaryTrace" id="Q04AV7"/>
<dbReference type="GO" id="GO:0005737">
    <property type="term" value="C:cytoplasm"/>
    <property type="evidence" value="ECO:0007669"/>
    <property type="project" value="UniProtKB-SubCell"/>
</dbReference>
<dbReference type="GO" id="GO:0016279">
    <property type="term" value="F:protein-lysine N-methyltransferase activity"/>
    <property type="evidence" value="ECO:0007669"/>
    <property type="project" value="RHEA"/>
</dbReference>
<dbReference type="GO" id="GO:0032259">
    <property type="term" value="P:methylation"/>
    <property type="evidence" value="ECO:0007669"/>
    <property type="project" value="UniProtKB-KW"/>
</dbReference>
<dbReference type="CDD" id="cd02440">
    <property type="entry name" value="AdoMet_MTases"/>
    <property type="match status" value="1"/>
</dbReference>
<dbReference type="Gene3D" id="3.40.50.150">
    <property type="entry name" value="Vaccinia Virus protein VP39"/>
    <property type="match status" value="1"/>
</dbReference>
<dbReference type="HAMAP" id="MF_00735">
    <property type="entry name" value="Methyltr_PrmA"/>
    <property type="match status" value="1"/>
</dbReference>
<dbReference type="InterPro" id="IPR050078">
    <property type="entry name" value="Ribosomal_L11_MeTrfase_PrmA"/>
</dbReference>
<dbReference type="InterPro" id="IPR004498">
    <property type="entry name" value="Ribosomal_PrmA_MeTrfase"/>
</dbReference>
<dbReference type="InterPro" id="IPR029063">
    <property type="entry name" value="SAM-dependent_MTases_sf"/>
</dbReference>
<dbReference type="NCBIfam" id="TIGR00406">
    <property type="entry name" value="prmA"/>
    <property type="match status" value="1"/>
</dbReference>
<dbReference type="PANTHER" id="PTHR43648">
    <property type="entry name" value="ELECTRON TRANSFER FLAVOPROTEIN BETA SUBUNIT LYSINE METHYLTRANSFERASE"/>
    <property type="match status" value="1"/>
</dbReference>
<dbReference type="PANTHER" id="PTHR43648:SF1">
    <property type="entry name" value="ELECTRON TRANSFER FLAVOPROTEIN BETA SUBUNIT LYSINE METHYLTRANSFERASE"/>
    <property type="match status" value="1"/>
</dbReference>
<dbReference type="Pfam" id="PF06325">
    <property type="entry name" value="PrmA"/>
    <property type="match status" value="1"/>
</dbReference>
<dbReference type="PIRSF" id="PIRSF000401">
    <property type="entry name" value="RPL11_MTase"/>
    <property type="match status" value="1"/>
</dbReference>
<dbReference type="SUPFAM" id="SSF53335">
    <property type="entry name" value="S-adenosyl-L-methionine-dependent methyltransferases"/>
    <property type="match status" value="1"/>
</dbReference>
<evidence type="ECO:0000255" key="1">
    <source>
        <dbReference type="HAMAP-Rule" id="MF_00735"/>
    </source>
</evidence>
<evidence type="ECO:0007744" key="2">
    <source>
        <dbReference type="PDB" id="3GRZ"/>
    </source>
</evidence>
<evidence type="ECO:0007829" key="3">
    <source>
        <dbReference type="PDB" id="3GRZ"/>
    </source>
</evidence>
<accession>Q04AV7</accession>
<gene>
    <name evidence="1" type="primary">prmA</name>
    <name type="ordered locus">LBUL_0809</name>
</gene>
<keyword id="KW-0002">3D-structure</keyword>
<keyword id="KW-0963">Cytoplasm</keyword>
<keyword id="KW-0489">Methyltransferase</keyword>
<keyword id="KW-0949">S-adenosyl-L-methionine</keyword>
<keyword id="KW-0808">Transferase</keyword>
<reference key="1">
    <citation type="journal article" date="2006" name="Proc. Natl. Acad. Sci. U.S.A.">
        <title>Comparative genomics of the lactic acid bacteria.</title>
        <authorList>
            <person name="Makarova K.S."/>
            <person name="Slesarev A."/>
            <person name="Wolf Y.I."/>
            <person name="Sorokin A."/>
            <person name="Mirkin B."/>
            <person name="Koonin E.V."/>
            <person name="Pavlov A."/>
            <person name="Pavlova N."/>
            <person name="Karamychev V."/>
            <person name="Polouchine N."/>
            <person name="Shakhova V."/>
            <person name="Grigoriev I."/>
            <person name="Lou Y."/>
            <person name="Rohksar D."/>
            <person name="Lucas S."/>
            <person name="Huang K."/>
            <person name="Goodstein D.M."/>
            <person name="Hawkins T."/>
            <person name="Plengvidhya V."/>
            <person name="Welker D."/>
            <person name="Hughes J."/>
            <person name="Goh Y."/>
            <person name="Benson A."/>
            <person name="Baldwin K."/>
            <person name="Lee J.-H."/>
            <person name="Diaz-Muniz I."/>
            <person name="Dosti B."/>
            <person name="Smeianov V."/>
            <person name="Wechter W."/>
            <person name="Barabote R."/>
            <person name="Lorca G."/>
            <person name="Altermann E."/>
            <person name="Barrangou R."/>
            <person name="Ganesan B."/>
            <person name="Xie Y."/>
            <person name="Rawsthorne H."/>
            <person name="Tamir D."/>
            <person name="Parker C."/>
            <person name="Breidt F."/>
            <person name="Broadbent J.R."/>
            <person name="Hutkins R."/>
            <person name="O'Sullivan D."/>
            <person name="Steele J."/>
            <person name="Unlu G."/>
            <person name="Saier M.H. Jr."/>
            <person name="Klaenhammer T."/>
            <person name="Richardson P."/>
            <person name="Kozyavkin S."/>
            <person name="Weimer B.C."/>
            <person name="Mills D.A."/>
        </authorList>
    </citation>
    <scope>NUCLEOTIDE SEQUENCE [LARGE SCALE GENOMIC DNA]</scope>
    <source>
        <strain>ATCC BAA-365 / Lb-18</strain>
    </source>
</reference>
<reference evidence="2" key="2">
    <citation type="submission" date="2009-03" db="PDB data bank">
        <title>Crystal structure of ribosomal protein 11 methylase from Lactobacillus delbrueckii subsp. bulgaricus.</title>
        <authorList>
            <person name="Patskovsky Y."/>
            <person name="Ramagopal U.A."/>
            <person name="Toro R."/>
            <person name="Morano C."/>
            <person name="Freeman J."/>
            <person name="Chang S."/>
            <person name="Sauder J.M."/>
            <person name="Burley S.K."/>
            <person name="Almo S.C."/>
        </authorList>
    </citation>
    <scope>X-RAY CRYSTALLOGRAPHY (2.00 ANGSTROMS) OF 117-313</scope>
    <source>
        <strain>ATCC BAA-365 / Lb-18</strain>
    </source>
</reference>
<comment type="function">
    <text evidence="1">Methylates ribosomal protein L11.</text>
</comment>
<comment type="catalytic activity">
    <reaction evidence="1">
        <text>L-lysyl-[protein] + 3 S-adenosyl-L-methionine = N(6),N(6),N(6)-trimethyl-L-lysyl-[protein] + 3 S-adenosyl-L-homocysteine + 3 H(+)</text>
        <dbReference type="Rhea" id="RHEA:54192"/>
        <dbReference type="Rhea" id="RHEA-COMP:9752"/>
        <dbReference type="Rhea" id="RHEA-COMP:13826"/>
        <dbReference type="ChEBI" id="CHEBI:15378"/>
        <dbReference type="ChEBI" id="CHEBI:29969"/>
        <dbReference type="ChEBI" id="CHEBI:57856"/>
        <dbReference type="ChEBI" id="CHEBI:59789"/>
        <dbReference type="ChEBI" id="CHEBI:61961"/>
    </reaction>
</comment>
<comment type="subcellular location">
    <subcellularLocation>
        <location evidence="1">Cytoplasm</location>
    </subcellularLocation>
</comment>
<comment type="similarity">
    <text evidence="1">Belongs to the methyltransferase superfamily. PrmA family.</text>
</comment>
<feature type="chain" id="PRO_1000062124" description="Ribosomal protein L11 methyltransferase">
    <location>
        <begin position="1"/>
        <end position="314"/>
    </location>
</feature>
<feature type="binding site" evidence="1">
    <location>
        <position position="163"/>
    </location>
    <ligand>
        <name>S-adenosyl-L-methionine</name>
        <dbReference type="ChEBI" id="CHEBI:59789"/>
    </ligand>
</feature>
<feature type="binding site" evidence="1">
    <location>
        <position position="184"/>
    </location>
    <ligand>
        <name>S-adenosyl-L-methionine</name>
        <dbReference type="ChEBI" id="CHEBI:59789"/>
    </ligand>
</feature>
<feature type="binding site" evidence="1">
    <location>
        <position position="206"/>
    </location>
    <ligand>
        <name>S-adenosyl-L-methionine</name>
        <dbReference type="ChEBI" id="CHEBI:59789"/>
    </ligand>
</feature>
<feature type="binding site" evidence="1">
    <location>
        <position position="248"/>
    </location>
    <ligand>
        <name>S-adenosyl-L-methionine</name>
        <dbReference type="ChEBI" id="CHEBI:59789"/>
    </ligand>
</feature>
<feature type="strand" evidence="3">
    <location>
        <begin position="122"/>
        <end position="125"/>
    </location>
</feature>
<feature type="strand" evidence="3">
    <location>
        <begin position="128"/>
        <end position="132"/>
    </location>
</feature>
<feature type="strand" evidence="3">
    <location>
        <begin position="145"/>
        <end position="150"/>
    </location>
</feature>
<feature type="helix" evidence="3">
    <location>
        <begin position="160"/>
        <end position="173"/>
    </location>
</feature>
<feature type="strand" evidence="3">
    <location>
        <begin position="179"/>
        <end position="183"/>
    </location>
</feature>
<feature type="helix" evidence="3">
    <location>
        <begin position="189"/>
        <end position="196"/>
    </location>
</feature>
<feature type="strand" evidence="3">
    <location>
        <begin position="200"/>
        <end position="207"/>
    </location>
</feature>
<feature type="helix" evidence="3">
    <location>
        <begin position="209"/>
        <end position="221"/>
    </location>
</feature>
<feature type="strand" evidence="3">
    <location>
        <begin position="228"/>
        <end position="233"/>
    </location>
</feature>
<feature type="turn" evidence="3">
    <location>
        <begin position="234"/>
        <end position="237"/>
    </location>
</feature>
<feature type="strand" evidence="3">
    <location>
        <begin position="242"/>
        <end position="249"/>
    </location>
</feature>
<feature type="helix" evidence="3">
    <location>
        <begin position="251"/>
        <end position="257"/>
    </location>
</feature>
<feature type="helix" evidence="3">
    <location>
        <begin position="258"/>
        <end position="260"/>
    </location>
</feature>
<feature type="helix" evidence="3">
    <location>
        <begin position="262"/>
        <end position="264"/>
    </location>
</feature>
<feature type="strand" evidence="3">
    <location>
        <begin position="265"/>
        <end position="277"/>
    </location>
</feature>
<feature type="helix" evidence="3">
    <location>
        <begin position="278"/>
        <end position="280"/>
    </location>
</feature>
<feature type="helix" evidence="3">
    <location>
        <begin position="281"/>
        <end position="290"/>
    </location>
</feature>
<feature type="strand" evidence="3">
    <location>
        <begin position="293"/>
        <end position="301"/>
    </location>
</feature>
<feature type="strand" evidence="3">
    <location>
        <begin position="304"/>
        <end position="311"/>
    </location>
</feature>
<protein>
    <recommendedName>
        <fullName evidence="1">Ribosomal protein L11 methyltransferase</fullName>
        <shortName evidence="1">L11 Mtase</shortName>
        <ecNumber evidence="1">2.1.1.-</ecNumber>
    </recommendedName>
</protein>
<sequence>MKLLEIKIESSYDVEDALAYFATEDLKALGTEARRRSDFEQAGWLHDSTVVDMDDIPNLPDELEFIAYFDEETDPEEMVKCFKDKLAELAGYGLKTAPGEISVDYVADQDWNTVWKKYYHVINLSRHLAIVPEWEDYQPVFKDQEIIRLDPGLAFGTGNHQTTQLAMLGIERAMVKPLTVADVGTGSGILAIAAHKLGAKSVLATDISDESMTAAEENAALNGIYDIALQKTSLLADVDGKFDLIVANILAEILLDLIPQLDSHLNEDGQVIFSGIDYLQLPKIEQALAENSFQIDLKMRAGRWIGLAISRKHD</sequence>
<name>PRMA_LACDB</name>
<organism>
    <name type="scientific">Lactobacillus delbrueckii subsp. bulgaricus (strain ATCC BAA-365 / Lb-18)</name>
    <dbReference type="NCBI Taxonomy" id="321956"/>
    <lineage>
        <taxon>Bacteria</taxon>
        <taxon>Bacillati</taxon>
        <taxon>Bacillota</taxon>
        <taxon>Bacilli</taxon>
        <taxon>Lactobacillales</taxon>
        <taxon>Lactobacillaceae</taxon>
        <taxon>Lactobacillus</taxon>
    </lineage>
</organism>
<proteinExistence type="evidence at protein level"/>